<evidence type="ECO:0000255" key="1">
    <source>
        <dbReference type="HAMAP-Rule" id="MF_01328"/>
    </source>
</evidence>
<evidence type="ECO:0000256" key="2">
    <source>
        <dbReference type="SAM" id="MobiDB-lite"/>
    </source>
</evidence>
<evidence type="ECO:0000305" key="3"/>
<reference key="1">
    <citation type="journal article" date="2003" name="Proc. Natl. Acad. Sci. U.S.A.">
        <title>Complete genome sequence of Lactobacillus plantarum WCFS1.</title>
        <authorList>
            <person name="Kleerebezem M."/>
            <person name="Boekhorst J."/>
            <person name="van Kranenburg R."/>
            <person name="Molenaar D."/>
            <person name="Kuipers O.P."/>
            <person name="Leer R."/>
            <person name="Tarchini R."/>
            <person name="Peters S.A."/>
            <person name="Sandbrink H.M."/>
            <person name="Fiers M.W.E.J."/>
            <person name="Stiekema W."/>
            <person name="Klein Lankhorst R.M."/>
            <person name="Bron P.A."/>
            <person name="Hoffer S.M."/>
            <person name="Nierop Groot M.N."/>
            <person name="Kerkhoven R."/>
            <person name="De Vries M."/>
            <person name="Ursing B."/>
            <person name="De Vos W.M."/>
            <person name="Siezen R.J."/>
        </authorList>
    </citation>
    <scope>NUCLEOTIDE SEQUENCE [LARGE SCALE GENOMIC DNA]</scope>
    <source>
        <strain>ATCC BAA-793 / NCIMB 8826 / WCFS1</strain>
    </source>
</reference>
<reference key="2">
    <citation type="journal article" date="2012" name="J. Bacteriol.">
        <title>Complete resequencing and reannotation of the Lactobacillus plantarum WCFS1 genome.</title>
        <authorList>
            <person name="Siezen R.J."/>
            <person name="Francke C."/>
            <person name="Renckens B."/>
            <person name="Boekhorst J."/>
            <person name="Wels M."/>
            <person name="Kleerebezem M."/>
            <person name="van Hijum S.A."/>
        </authorList>
    </citation>
    <scope>NUCLEOTIDE SEQUENCE [LARGE SCALE GENOMIC DNA]</scope>
    <scope>GENOME REANNOTATION</scope>
    <source>
        <strain>ATCC BAA-793 / NCIMB 8826 / WCFS1</strain>
    </source>
</reference>
<comment type="function">
    <text evidence="1">One of the primary rRNA binding proteins, this protein initially binds near the 5'-end of the 23S rRNA. It is important during the early stages of 50S assembly. It makes multiple contacts with different domains of the 23S rRNA in the assembled 50S subunit and ribosome.</text>
</comment>
<comment type="function">
    <text evidence="1">Forms part of the polypeptide exit tunnel.</text>
</comment>
<comment type="subunit">
    <text evidence="1">Part of the 50S ribosomal subunit.</text>
</comment>
<comment type="similarity">
    <text evidence="1">Belongs to the universal ribosomal protein uL4 family.</text>
</comment>
<keyword id="KW-1185">Reference proteome</keyword>
<keyword id="KW-0687">Ribonucleoprotein</keyword>
<keyword id="KW-0689">Ribosomal protein</keyword>
<keyword id="KW-0694">RNA-binding</keyword>
<keyword id="KW-0699">rRNA-binding</keyword>
<feature type="chain" id="PRO_0000129229" description="Large ribosomal subunit protein uL4">
    <location>
        <begin position="1"/>
        <end position="207"/>
    </location>
</feature>
<feature type="region of interest" description="Disordered" evidence="2">
    <location>
        <begin position="45"/>
        <end position="78"/>
    </location>
</feature>
<feature type="compositionally biased region" description="Basic residues" evidence="2">
    <location>
        <begin position="51"/>
        <end position="71"/>
    </location>
</feature>
<organism>
    <name type="scientific">Lactiplantibacillus plantarum (strain ATCC BAA-793 / NCIMB 8826 / WCFS1)</name>
    <name type="common">Lactobacillus plantarum</name>
    <dbReference type="NCBI Taxonomy" id="220668"/>
    <lineage>
        <taxon>Bacteria</taxon>
        <taxon>Bacillati</taxon>
        <taxon>Bacillota</taxon>
        <taxon>Bacilli</taxon>
        <taxon>Lactobacillales</taxon>
        <taxon>Lactobacillaceae</taxon>
        <taxon>Lactiplantibacillus</taxon>
    </lineage>
</organism>
<sequence>MTSVALFKQDGTQNGDVTLNDAVFGVEPNENVVFDAILMQRASMRQGTHAVKNRSARRGGGRKPWRQKGTGRARQGSIRSPQWRKGGIVFGPTPRSYSYKLPKKVMRLALKSVLSQKVLDNSLVAVDSLAFDAPKTKDFVNVLNNLNVDTKTLVLVEEDNEKAALAGRNLPNVKILKAKGVNVLDVANSDKLVVTQKALDQLEEALA</sequence>
<dbReference type="EMBL" id="AL935263">
    <property type="protein sequence ID" value="CCC78445.1"/>
    <property type="molecule type" value="Genomic_DNA"/>
</dbReference>
<dbReference type="RefSeq" id="WP_003641253.1">
    <property type="nucleotide sequence ID" value="NC_004567.2"/>
</dbReference>
<dbReference type="RefSeq" id="YP_004888959.1">
    <property type="nucleotide sequence ID" value="NC_004567.2"/>
</dbReference>
<dbReference type="SMR" id="Q88XY5"/>
<dbReference type="STRING" id="220668.lp_1034"/>
<dbReference type="EnsemblBacteria" id="CCC78445">
    <property type="protein sequence ID" value="CCC78445"/>
    <property type="gene ID" value="lp_1034"/>
</dbReference>
<dbReference type="GeneID" id="89668548"/>
<dbReference type="KEGG" id="lpl:lp_1034"/>
<dbReference type="PATRIC" id="fig|220668.9.peg.872"/>
<dbReference type="eggNOG" id="COG0088">
    <property type="taxonomic scope" value="Bacteria"/>
</dbReference>
<dbReference type="HOGENOM" id="CLU_041575_5_2_9"/>
<dbReference type="OrthoDB" id="9803201at2"/>
<dbReference type="PhylomeDB" id="Q88XY5"/>
<dbReference type="Proteomes" id="UP000000432">
    <property type="component" value="Chromosome"/>
</dbReference>
<dbReference type="GO" id="GO:1990904">
    <property type="term" value="C:ribonucleoprotein complex"/>
    <property type="evidence" value="ECO:0007669"/>
    <property type="project" value="UniProtKB-KW"/>
</dbReference>
<dbReference type="GO" id="GO:0005840">
    <property type="term" value="C:ribosome"/>
    <property type="evidence" value="ECO:0007669"/>
    <property type="project" value="UniProtKB-KW"/>
</dbReference>
<dbReference type="GO" id="GO:0019843">
    <property type="term" value="F:rRNA binding"/>
    <property type="evidence" value="ECO:0007669"/>
    <property type="project" value="UniProtKB-UniRule"/>
</dbReference>
<dbReference type="GO" id="GO:0003735">
    <property type="term" value="F:structural constituent of ribosome"/>
    <property type="evidence" value="ECO:0007669"/>
    <property type="project" value="InterPro"/>
</dbReference>
<dbReference type="GO" id="GO:0006412">
    <property type="term" value="P:translation"/>
    <property type="evidence" value="ECO:0007669"/>
    <property type="project" value="UniProtKB-UniRule"/>
</dbReference>
<dbReference type="FunFam" id="3.40.1370.10:FF:000003">
    <property type="entry name" value="50S ribosomal protein L4"/>
    <property type="match status" value="1"/>
</dbReference>
<dbReference type="Gene3D" id="3.40.1370.10">
    <property type="match status" value="1"/>
</dbReference>
<dbReference type="HAMAP" id="MF_01328_B">
    <property type="entry name" value="Ribosomal_uL4_B"/>
    <property type="match status" value="1"/>
</dbReference>
<dbReference type="InterPro" id="IPR002136">
    <property type="entry name" value="Ribosomal_uL4"/>
</dbReference>
<dbReference type="InterPro" id="IPR013005">
    <property type="entry name" value="Ribosomal_uL4-like"/>
</dbReference>
<dbReference type="InterPro" id="IPR023574">
    <property type="entry name" value="Ribosomal_uL4_dom_sf"/>
</dbReference>
<dbReference type="NCBIfam" id="TIGR03953">
    <property type="entry name" value="rplD_bact"/>
    <property type="match status" value="1"/>
</dbReference>
<dbReference type="PANTHER" id="PTHR10746">
    <property type="entry name" value="50S RIBOSOMAL PROTEIN L4"/>
    <property type="match status" value="1"/>
</dbReference>
<dbReference type="PANTHER" id="PTHR10746:SF6">
    <property type="entry name" value="LARGE RIBOSOMAL SUBUNIT PROTEIN UL4M"/>
    <property type="match status" value="1"/>
</dbReference>
<dbReference type="Pfam" id="PF00573">
    <property type="entry name" value="Ribosomal_L4"/>
    <property type="match status" value="1"/>
</dbReference>
<dbReference type="SUPFAM" id="SSF52166">
    <property type="entry name" value="Ribosomal protein L4"/>
    <property type="match status" value="1"/>
</dbReference>
<protein>
    <recommendedName>
        <fullName evidence="1">Large ribosomal subunit protein uL4</fullName>
    </recommendedName>
    <alternativeName>
        <fullName evidence="3">50S ribosomal protein L4</fullName>
    </alternativeName>
</protein>
<accession>Q88XY5</accession>
<accession>F9UMK6</accession>
<gene>
    <name evidence="1" type="primary">rplD</name>
    <name type="ordered locus">lp_1034</name>
</gene>
<name>RL4_LACPL</name>
<proteinExistence type="inferred from homology"/>